<organism>
    <name type="scientific">Synechocystis sp. (strain ATCC 27184 / PCC 6803 / Kazusa)</name>
    <dbReference type="NCBI Taxonomy" id="1111708"/>
    <lineage>
        <taxon>Bacteria</taxon>
        <taxon>Bacillati</taxon>
        <taxon>Cyanobacteriota</taxon>
        <taxon>Cyanophyceae</taxon>
        <taxon>Synechococcales</taxon>
        <taxon>Merismopediaceae</taxon>
        <taxon>Synechocystis</taxon>
    </lineage>
</organism>
<proteinExistence type="evidence at protein level"/>
<protein>
    <recommendedName>
        <fullName>Photosystem I reaction center subunit IX</fullName>
    </recommendedName>
</protein>
<keyword id="KW-0002">3D-structure</keyword>
<keyword id="KW-0472">Membrane</keyword>
<keyword id="KW-0602">Photosynthesis</keyword>
<keyword id="KW-0603">Photosystem I</keyword>
<keyword id="KW-1185">Reference proteome</keyword>
<keyword id="KW-0793">Thylakoid</keyword>
<keyword id="KW-0812">Transmembrane</keyword>
<keyword id="KW-1133">Transmembrane helix</keyword>
<name>PSAJ_SYNY3</name>
<comment type="function">
    <text evidence="1">May help in the organization of the PsaE and PsaF subunits.</text>
</comment>
<comment type="subcellular location">
    <subcellularLocation>
        <location evidence="1">Cellular thylakoid membrane</location>
        <topology evidence="1">Single-pass membrane protein</topology>
    </subcellularLocation>
</comment>
<comment type="similarity">
    <text evidence="3">Belongs to the PsaJ family.</text>
</comment>
<feature type="chain" id="PRO_0000207828" description="Photosystem I reaction center subunit IX">
    <location>
        <begin position="1"/>
        <end position="40"/>
    </location>
</feature>
<feature type="transmembrane region" description="Helical" evidence="2">
    <location>
        <begin position="7"/>
        <end position="27"/>
    </location>
</feature>
<feature type="helix" evidence="4">
    <location>
        <begin position="2"/>
        <end position="8"/>
    </location>
</feature>
<feature type="helix" evidence="4">
    <location>
        <begin position="11"/>
        <end position="32"/>
    </location>
</feature>
<sequence length="40" mass="4532">MDGLKSFLSTAPVMIMALLTFTAGILIEFNRFYPDLLFHP</sequence>
<dbReference type="EMBL" id="L20938">
    <property type="protein sequence ID" value="AAA27295.1"/>
    <property type="molecule type" value="Genomic_DNA"/>
</dbReference>
<dbReference type="EMBL" id="BA000022">
    <property type="protein sequence ID" value="BAA18107.1"/>
    <property type="molecule type" value="Genomic_DNA"/>
</dbReference>
<dbReference type="PIR" id="S75546">
    <property type="entry name" value="S75546"/>
</dbReference>
<dbReference type="PDB" id="4KT0">
    <property type="method" value="X-ray"/>
    <property type="resolution" value="2.80 A"/>
    <property type="chains" value="J=1-40"/>
</dbReference>
<dbReference type="PDB" id="4L6V">
    <property type="method" value="X-ray"/>
    <property type="resolution" value="3.80 A"/>
    <property type="chains" value="6/F/f=1-40"/>
</dbReference>
<dbReference type="PDB" id="5OY0">
    <property type="method" value="X-ray"/>
    <property type="resolution" value="2.50 A"/>
    <property type="chains" value="7/J/j=1-40"/>
</dbReference>
<dbReference type="PDB" id="6HQB">
    <property type="method" value="X-ray"/>
    <property type="resolution" value="4.00 A"/>
    <property type="chains" value="J=1-40"/>
</dbReference>
<dbReference type="PDB" id="6NWA">
    <property type="method" value="EM"/>
    <property type="resolution" value="3.48 A"/>
    <property type="chains" value="J/S/j=1-40"/>
</dbReference>
<dbReference type="PDB" id="6UZV">
    <property type="method" value="EM"/>
    <property type="resolution" value="3.10 A"/>
    <property type="chains" value="7/J/j=1-40"/>
</dbReference>
<dbReference type="PDB" id="7UMH">
    <property type="method" value="EM"/>
    <property type="resolution" value="2.60 A"/>
    <property type="chains" value="J/S/j=1-40"/>
</dbReference>
<dbReference type="PDB" id="8AM5">
    <property type="method" value="EM"/>
    <property type="resolution" value="3.10 A"/>
    <property type="chains" value="j=1-40"/>
</dbReference>
<dbReference type="PDB" id="8ASL">
    <property type="method" value="EM"/>
    <property type="resolution" value="3.15 A"/>
    <property type="chains" value="j=1-40"/>
</dbReference>
<dbReference type="PDB" id="8ASP">
    <property type="method" value="EM"/>
    <property type="resolution" value="2.90 A"/>
    <property type="chains" value="j=1-40"/>
</dbReference>
<dbReference type="PDB" id="9AU4">
    <property type="method" value="EM"/>
    <property type="resolution" value="2.03 A"/>
    <property type="chains" value="J/S/j=1-40"/>
</dbReference>
<dbReference type="PDBsum" id="4KT0"/>
<dbReference type="PDBsum" id="4L6V"/>
<dbReference type="PDBsum" id="5OY0"/>
<dbReference type="PDBsum" id="6HQB"/>
<dbReference type="PDBsum" id="6NWA"/>
<dbReference type="PDBsum" id="6UZV"/>
<dbReference type="PDBsum" id="7UMH"/>
<dbReference type="PDBsum" id="8AM5"/>
<dbReference type="PDBsum" id="8ASL"/>
<dbReference type="PDBsum" id="8ASP"/>
<dbReference type="PDBsum" id="9AU4"/>
<dbReference type="EMDB" id="EMD-0524"/>
<dbReference type="EMDB" id="EMD-15522"/>
<dbReference type="EMDB" id="EMD-15618"/>
<dbReference type="EMDB" id="EMD-15621"/>
<dbReference type="EMDB" id="EMD-20963"/>
<dbReference type="EMDB" id="EMD-26601"/>
<dbReference type="EMDB" id="EMD-43843"/>
<dbReference type="SMR" id="Q55329"/>
<dbReference type="IntAct" id="Q55329">
    <property type="interactions" value="1"/>
</dbReference>
<dbReference type="STRING" id="1148.gene:10498978"/>
<dbReference type="PaxDb" id="1148-1653191"/>
<dbReference type="EnsemblBacteria" id="BAA18107">
    <property type="protein sequence ID" value="BAA18107"/>
    <property type="gene ID" value="BAA18107"/>
</dbReference>
<dbReference type="KEGG" id="syn:sml0008"/>
<dbReference type="eggNOG" id="ENOG5033A5A">
    <property type="taxonomic scope" value="Bacteria"/>
</dbReference>
<dbReference type="InParanoid" id="Q55329"/>
<dbReference type="BioCyc" id="MetaCyc:PSAJ-MONOMER"/>
<dbReference type="EvolutionaryTrace" id="Q55329"/>
<dbReference type="Proteomes" id="UP000001425">
    <property type="component" value="Chromosome"/>
</dbReference>
<dbReference type="GO" id="GO:0009522">
    <property type="term" value="C:photosystem I"/>
    <property type="evidence" value="ECO:0007669"/>
    <property type="project" value="UniProtKB-KW"/>
</dbReference>
<dbReference type="GO" id="GO:0031676">
    <property type="term" value="C:plasma membrane-derived thylakoid membrane"/>
    <property type="evidence" value="ECO:0007669"/>
    <property type="project" value="UniProtKB-SubCell"/>
</dbReference>
<dbReference type="GO" id="GO:0015979">
    <property type="term" value="P:photosynthesis"/>
    <property type="evidence" value="ECO:0007669"/>
    <property type="project" value="UniProtKB-UniRule"/>
</dbReference>
<dbReference type="Gene3D" id="1.20.5.510">
    <property type="entry name" value="Single helix bin"/>
    <property type="match status" value="1"/>
</dbReference>
<dbReference type="HAMAP" id="MF_00522">
    <property type="entry name" value="PSI_PsaJ"/>
    <property type="match status" value="1"/>
</dbReference>
<dbReference type="InterPro" id="IPR002615">
    <property type="entry name" value="PSI_PsaJ"/>
</dbReference>
<dbReference type="InterPro" id="IPR036062">
    <property type="entry name" value="PSI_PsaJ_sf"/>
</dbReference>
<dbReference type="NCBIfam" id="NF002743">
    <property type="entry name" value="PRK02733.1"/>
    <property type="match status" value="1"/>
</dbReference>
<dbReference type="PANTHER" id="PTHR36082">
    <property type="match status" value="1"/>
</dbReference>
<dbReference type="PANTHER" id="PTHR36082:SF2">
    <property type="entry name" value="PHOTOSYSTEM I REACTION CENTER SUBUNIT IX"/>
    <property type="match status" value="1"/>
</dbReference>
<dbReference type="Pfam" id="PF01701">
    <property type="entry name" value="PSI_PsaJ"/>
    <property type="match status" value="1"/>
</dbReference>
<dbReference type="SUPFAM" id="SSF81544">
    <property type="entry name" value="Subunit IX of photosystem I reaction centre, PsaJ"/>
    <property type="match status" value="1"/>
</dbReference>
<evidence type="ECO:0000250" key="1"/>
<evidence type="ECO:0000255" key="2"/>
<evidence type="ECO:0000305" key="3"/>
<evidence type="ECO:0007829" key="4">
    <source>
        <dbReference type="PDB" id="5OY0"/>
    </source>
</evidence>
<accession>Q55329</accession>
<gene>
    <name type="primary">psaJ</name>
    <name type="ordered locus">sml0008</name>
</gene>
<reference key="1">
    <citation type="submission" date="1993-07" db="EMBL/GenBank/DDBJ databases">
        <authorList>
            <person name="Xu Q."/>
            <person name="Yu L."/>
            <person name="Chitnis V.P."/>
            <person name="Chitnis P.R."/>
        </authorList>
    </citation>
    <scope>NUCLEOTIDE SEQUENCE [GENOMIC DNA]</scope>
</reference>
<reference key="2">
    <citation type="journal article" date="1996" name="DNA Res.">
        <title>Sequence analysis of the genome of the unicellular cyanobacterium Synechocystis sp. strain PCC6803. II. Sequence determination of the entire genome and assignment of potential protein-coding regions.</title>
        <authorList>
            <person name="Kaneko T."/>
            <person name="Sato S."/>
            <person name="Kotani H."/>
            <person name="Tanaka A."/>
            <person name="Asamizu E."/>
            <person name="Nakamura Y."/>
            <person name="Miyajima N."/>
            <person name="Hirosawa M."/>
            <person name="Sugiura M."/>
            <person name="Sasamoto S."/>
            <person name="Kimura T."/>
            <person name="Hosouchi T."/>
            <person name="Matsuno A."/>
            <person name="Muraki A."/>
            <person name="Nakazaki N."/>
            <person name="Naruo K."/>
            <person name="Okumura S."/>
            <person name="Shimpo S."/>
            <person name="Takeuchi C."/>
            <person name="Wada T."/>
            <person name="Watanabe A."/>
            <person name="Yamada M."/>
            <person name="Yasuda M."/>
            <person name="Tabata S."/>
        </authorList>
    </citation>
    <scope>NUCLEOTIDE SEQUENCE [LARGE SCALE GENOMIC DNA]</scope>
    <source>
        <strain>ATCC 27184 / PCC 6803 / Kazusa</strain>
    </source>
</reference>